<evidence type="ECO:0000255" key="1">
    <source>
        <dbReference type="HAMAP-Rule" id="MF_00420"/>
    </source>
</evidence>
<keyword id="KW-0067">ATP-binding</keyword>
<keyword id="KW-0963">Cytoplasm</keyword>
<keyword id="KW-0436">Ligase</keyword>
<keyword id="KW-0460">Magnesium</keyword>
<keyword id="KW-0479">Metal-binding</keyword>
<keyword id="KW-0547">Nucleotide-binding</keyword>
<keyword id="KW-0658">Purine biosynthesis</keyword>
<organism>
    <name type="scientific">Cyanothece sp. (strain PCC 7425 / ATCC 29141)</name>
    <dbReference type="NCBI Taxonomy" id="395961"/>
    <lineage>
        <taxon>Bacteria</taxon>
        <taxon>Bacillati</taxon>
        <taxon>Cyanobacteriota</taxon>
        <taxon>Cyanophyceae</taxon>
        <taxon>Gomontiellales</taxon>
        <taxon>Cyanothecaceae</taxon>
        <taxon>Cyanothece</taxon>
    </lineage>
</organism>
<sequence length="782" mass="83802">MSLPANTPFSLEEITAEGLKPEEYAEIVQRLGRHPNLAELGMFGVMWSEHCCYKNSRPLLKQFPTQGQRVLVGPGENAGVVDLGEGLRLAFKIESHNHPSAVEPFQGAATGVGGILRDIFTMGARPIALLNSLRFGSLDDPRTRRLFSGVVSGISHYGNCVGVPTVGGEVYFDPAYTGNPLVNVMALGLMETPEIVKSGASGIGNPVLYVGSTTGRDGMGGASFASAELSEASLDDRPAVQVGDPFLEKSLIEACLEAFKTGAVVAAQDMGAAGITCSTSEMAAKGGVGIDLDLDLIPVREKGMVPYEYLLSESQERMLFVAYKGREQELIDIFHRWGLHAVVAGRVIEEPIVRIRFQGGIAAEIPAAALAENTPLYHRQSLTEPPDFLKTAWAWTPAALPPCSTTGLQLESGEKTWNQVLLDLLASPTIASKRWVYRQYDHQVQNNTVLLPGAADAAVVRLRPQLADQACQGVNSGVAATLDCNARYVYLHPYAGAKAAVAEAARNLSCVGAEPLAVTDNLNFASPENPVGYWQLAEACRGLAEACRELNTPVTGGNVSLYNETLDPEGKPQPIYPTPVVGMVGLIPDLNRICGQGWQSTGDLIYLLGVPLSDAGHATVTLGGSEYLATIHQTIAGQPPQVDLALEKQVQAVCRHGIRQGWIHSAHDCAEGGIAIALAEACISGQRGAEIELDCSDISRLDQLLFAEGGARILVSVPLDQQTLWESYLEEQLQGHWQRLGQVTEINSCLWVRSSDNLSLIQVTIEEISTAWGKAIENKLSA</sequence>
<reference key="1">
    <citation type="journal article" date="2011" name="MBio">
        <title>Novel metabolic attributes of the genus Cyanothece, comprising a group of unicellular nitrogen-fixing Cyanobacteria.</title>
        <authorList>
            <person name="Bandyopadhyay A."/>
            <person name="Elvitigala T."/>
            <person name="Welsh E."/>
            <person name="Stockel J."/>
            <person name="Liberton M."/>
            <person name="Min H."/>
            <person name="Sherman L.A."/>
            <person name="Pakrasi H.B."/>
        </authorList>
    </citation>
    <scope>NUCLEOTIDE SEQUENCE [LARGE SCALE GENOMIC DNA]</scope>
    <source>
        <strain>PCC 7425 / ATCC 29141</strain>
    </source>
</reference>
<dbReference type="EC" id="6.3.5.3" evidence="1"/>
<dbReference type="EMBL" id="CP001344">
    <property type="protein sequence ID" value="ACL45908.1"/>
    <property type="molecule type" value="Genomic_DNA"/>
</dbReference>
<dbReference type="SMR" id="B8HRP1"/>
<dbReference type="STRING" id="395961.Cyan7425_3587"/>
<dbReference type="KEGG" id="cyn:Cyan7425_3587"/>
<dbReference type="eggNOG" id="COG0046">
    <property type="taxonomic scope" value="Bacteria"/>
</dbReference>
<dbReference type="HOGENOM" id="CLU_003100_0_1_3"/>
<dbReference type="OrthoDB" id="9804441at2"/>
<dbReference type="UniPathway" id="UPA00074">
    <property type="reaction ID" value="UER00128"/>
</dbReference>
<dbReference type="GO" id="GO:0005737">
    <property type="term" value="C:cytoplasm"/>
    <property type="evidence" value="ECO:0007669"/>
    <property type="project" value="UniProtKB-SubCell"/>
</dbReference>
<dbReference type="GO" id="GO:0005524">
    <property type="term" value="F:ATP binding"/>
    <property type="evidence" value="ECO:0007669"/>
    <property type="project" value="UniProtKB-UniRule"/>
</dbReference>
<dbReference type="GO" id="GO:0000287">
    <property type="term" value="F:magnesium ion binding"/>
    <property type="evidence" value="ECO:0007669"/>
    <property type="project" value="UniProtKB-UniRule"/>
</dbReference>
<dbReference type="GO" id="GO:0004642">
    <property type="term" value="F:phosphoribosylformylglycinamidine synthase activity"/>
    <property type="evidence" value="ECO:0007669"/>
    <property type="project" value="UniProtKB-UniRule"/>
</dbReference>
<dbReference type="GO" id="GO:0006189">
    <property type="term" value="P:'de novo' IMP biosynthetic process"/>
    <property type="evidence" value="ECO:0007669"/>
    <property type="project" value="UniProtKB-UniRule"/>
</dbReference>
<dbReference type="CDD" id="cd02203">
    <property type="entry name" value="PurL_repeat1"/>
    <property type="match status" value="1"/>
</dbReference>
<dbReference type="CDD" id="cd02204">
    <property type="entry name" value="PurL_repeat2"/>
    <property type="match status" value="1"/>
</dbReference>
<dbReference type="FunFam" id="3.30.1330.10:FF:000004">
    <property type="entry name" value="Phosphoribosylformylglycinamidine synthase subunit PurL"/>
    <property type="match status" value="1"/>
</dbReference>
<dbReference type="Gene3D" id="3.90.650.10">
    <property type="entry name" value="PurM-like C-terminal domain"/>
    <property type="match status" value="2"/>
</dbReference>
<dbReference type="Gene3D" id="3.30.1330.10">
    <property type="entry name" value="PurM-like, N-terminal domain"/>
    <property type="match status" value="2"/>
</dbReference>
<dbReference type="HAMAP" id="MF_00420">
    <property type="entry name" value="PurL_2"/>
    <property type="match status" value="1"/>
</dbReference>
<dbReference type="InterPro" id="IPR010074">
    <property type="entry name" value="PRibForGlyAmidine_synth_PurL"/>
</dbReference>
<dbReference type="InterPro" id="IPR041609">
    <property type="entry name" value="PurL_linker"/>
</dbReference>
<dbReference type="InterPro" id="IPR010918">
    <property type="entry name" value="PurM-like_C_dom"/>
</dbReference>
<dbReference type="InterPro" id="IPR036676">
    <property type="entry name" value="PurM-like_C_sf"/>
</dbReference>
<dbReference type="InterPro" id="IPR016188">
    <property type="entry name" value="PurM-like_N"/>
</dbReference>
<dbReference type="InterPro" id="IPR036921">
    <property type="entry name" value="PurM-like_N_sf"/>
</dbReference>
<dbReference type="NCBIfam" id="TIGR01736">
    <property type="entry name" value="FGAM_synth_II"/>
    <property type="match status" value="1"/>
</dbReference>
<dbReference type="NCBIfam" id="NF002290">
    <property type="entry name" value="PRK01213.1"/>
    <property type="match status" value="1"/>
</dbReference>
<dbReference type="PANTHER" id="PTHR43555">
    <property type="entry name" value="PHOSPHORIBOSYLFORMYLGLYCINAMIDINE SYNTHASE SUBUNIT PURL"/>
    <property type="match status" value="1"/>
</dbReference>
<dbReference type="PANTHER" id="PTHR43555:SF1">
    <property type="entry name" value="PHOSPHORIBOSYLFORMYLGLYCINAMIDINE SYNTHASE SUBUNIT PURL"/>
    <property type="match status" value="1"/>
</dbReference>
<dbReference type="Pfam" id="PF00586">
    <property type="entry name" value="AIRS"/>
    <property type="match status" value="2"/>
</dbReference>
<dbReference type="Pfam" id="PF02769">
    <property type="entry name" value="AIRS_C"/>
    <property type="match status" value="2"/>
</dbReference>
<dbReference type="Pfam" id="PF18072">
    <property type="entry name" value="FGAR-AT_linker"/>
    <property type="match status" value="1"/>
</dbReference>
<dbReference type="PIRSF" id="PIRSF001587">
    <property type="entry name" value="FGAM_synthase_II"/>
    <property type="match status" value="1"/>
</dbReference>
<dbReference type="SUPFAM" id="SSF56042">
    <property type="entry name" value="PurM C-terminal domain-like"/>
    <property type="match status" value="2"/>
</dbReference>
<dbReference type="SUPFAM" id="SSF55326">
    <property type="entry name" value="PurM N-terminal domain-like"/>
    <property type="match status" value="2"/>
</dbReference>
<feature type="chain" id="PRO_1000134898" description="Phosphoribosylformylglycinamidine synthase subunit PurL">
    <location>
        <begin position="1"/>
        <end position="782"/>
    </location>
</feature>
<feature type="active site" evidence="1">
    <location>
        <position position="50"/>
    </location>
</feature>
<feature type="active site" description="Proton acceptor" evidence="1">
    <location>
        <position position="96"/>
    </location>
</feature>
<feature type="binding site" evidence="1">
    <location>
        <position position="53"/>
    </location>
    <ligand>
        <name>ATP</name>
        <dbReference type="ChEBI" id="CHEBI:30616"/>
    </ligand>
</feature>
<feature type="binding site" evidence="1">
    <location>
        <position position="92"/>
    </location>
    <ligand>
        <name>ATP</name>
        <dbReference type="ChEBI" id="CHEBI:30616"/>
    </ligand>
</feature>
<feature type="binding site" evidence="1">
    <location>
        <position position="94"/>
    </location>
    <ligand>
        <name>Mg(2+)</name>
        <dbReference type="ChEBI" id="CHEBI:18420"/>
        <label>1</label>
    </ligand>
</feature>
<feature type="binding site" evidence="1">
    <location>
        <begin position="95"/>
        <end position="98"/>
    </location>
    <ligand>
        <name>substrate</name>
    </ligand>
</feature>
<feature type="binding site" evidence="1">
    <location>
        <position position="117"/>
    </location>
    <ligand>
        <name>substrate</name>
    </ligand>
</feature>
<feature type="binding site" evidence="1">
    <location>
        <position position="118"/>
    </location>
    <ligand>
        <name>Mg(2+)</name>
        <dbReference type="ChEBI" id="CHEBI:18420"/>
        <label>2</label>
    </ligand>
</feature>
<feature type="binding site" evidence="1">
    <location>
        <position position="241"/>
    </location>
    <ligand>
        <name>substrate</name>
    </ligand>
</feature>
<feature type="binding site" evidence="1">
    <location>
        <position position="269"/>
    </location>
    <ligand>
        <name>Mg(2+)</name>
        <dbReference type="ChEBI" id="CHEBI:18420"/>
        <label>2</label>
    </ligand>
</feature>
<feature type="binding site" evidence="1">
    <location>
        <begin position="313"/>
        <end position="315"/>
    </location>
    <ligand>
        <name>substrate</name>
    </ligand>
</feature>
<feature type="binding site" evidence="1">
    <location>
        <position position="520"/>
    </location>
    <ligand>
        <name>ATP</name>
        <dbReference type="ChEBI" id="CHEBI:30616"/>
    </ligand>
</feature>
<feature type="binding site" evidence="1">
    <location>
        <position position="557"/>
    </location>
    <ligand>
        <name>ATP</name>
        <dbReference type="ChEBI" id="CHEBI:30616"/>
    </ligand>
</feature>
<feature type="binding site" evidence="1">
    <location>
        <position position="558"/>
    </location>
    <ligand>
        <name>Mg(2+)</name>
        <dbReference type="ChEBI" id="CHEBI:18420"/>
        <label>1</label>
    </ligand>
</feature>
<feature type="binding site" evidence="1">
    <location>
        <position position="560"/>
    </location>
    <ligand>
        <name>substrate</name>
    </ligand>
</feature>
<accession>B8HRP1</accession>
<proteinExistence type="inferred from homology"/>
<comment type="function">
    <text evidence="1">Part of the phosphoribosylformylglycinamidine synthase complex involved in the purines biosynthetic pathway. Catalyzes the ATP-dependent conversion of formylglycinamide ribonucleotide (FGAR) and glutamine to yield formylglycinamidine ribonucleotide (FGAM) and glutamate. The FGAM synthase complex is composed of three subunits. PurQ produces an ammonia molecule by converting glutamine to glutamate. PurL transfers the ammonia molecule to FGAR to form FGAM in an ATP-dependent manner. PurS interacts with PurQ and PurL and is thought to assist in the transfer of the ammonia molecule from PurQ to PurL.</text>
</comment>
<comment type="catalytic activity">
    <reaction evidence="1">
        <text>N(2)-formyl-N(1)-(5-phospho-beta-D-ribosyl)glycinamide + L-glutamine + ATP + H2O = 2-formamido-N(1)-(5-O-phospho-beta-D-ribosyl)acetamidine + L-glutamate + ADP + phosphate + H(+)</text>
        <dbReference type="Rhea" id="RHEA:17129"/>
        <dbReference type="ChEBI" id="CHEBI:15377"/>
        <dbReference type="ChEBI" id="CHEBI:15378"/>
        <dbReference type="ChEBI" id="CHEBI:29985"/>
        <dbReference type="ChEBI" id="CHEBI:30616"/>
        <dbReference type="ChEBI" id="CHEBI:43474"/>
        <dbReference type="ChEBI" id="CHEBI:58359"/>
        <dbReference type="ChEBI" id="CHEBI:147286"/>
        <dbReference type="ChEBI" id="CHEBI:147287"/>
        <dbReference type="ChEBI" id="CHEBI:456216"/>
        <dbReference type="EC" id="6.3.5.3"/>
    </reaction>
</comment>
<comment type="pathway">
    <text evidence="1">Purine metabolism; IMP biosynthesis via de novo pathway; 5-amino-1-(5-phospho-D-ribosyl)imidazole from N(2)-formyl-N(1)-(5-phospho-D-ribosyl)glycinamide: step 1/2.</text>
</comment>
<comment type="subunit">
    <text evidence="1">Monomer. Part of the FGAM synthase complex composed of 1 PurL, 1 PurQ and 2 PurS subunits.</text>
</comment>
<comment type="subcellular location">
    <subcellularLocation>
        <location evidence="1">Cytoplasm</location>
    </subcellularLocation>
</comment>
<comment type="similarity">
    <text evidence="1">Belongs to the FGAMS family.</text>
</comment>
<gene>
    <name evidence="1" type="primary">purL</name>
    <name type="ordered locus">Cyan7425_3587</name>
</gene>
<protein>
    <recommendedName>
        <fullName evidence="1">Phosphoribosylformylglycinamidine synthase subunit PurL</fullName>
        <shortName evidence="1">FGAM synthase</shortName>
        <ecNumber evidence="1">6.3.5.3</ecNumber>
    </recommendedName>
    <alternativeName>
        <fullName evidence="1">Formylglycinamide ribonucleotide amidotransferase subunit II</fullName>
        <shortName evidence="1">FGAR amidotransferase II</shortName>
        <shortName evidence="1">FGAR-AT II</shortName>
    </alternativeName>
    <alternativeName>
        <fullName evidence="1">Glutamine amidotransferase PurL</fullName>
    </alternativeName>
    <alternativeName>
        <fullName evidence="1">Phosphoribosylformylglycinamidine synthase subunit II</fullName>
    </alternativeName>
</protein>
<name>PURL_CYAP4</name>